<gene>
    <name evidence="1" type="primary">rps14</name>
    <name type="ordered locus">MM_2138</name>
</gene>
<organism>
    <name type="scientific">Methanosarcina mazei (strain ATCC BAA-159 / DSM 3647 / Goe1 / Go1 / JCM 11833 / OCM 88)</name>
    <name type="common">Methanosarcina frisia</name>
    <dbReference type="NCBI Taxonomy" id="192952"/>
    <lineage>
        <taxon>Archaea</taxon>
        <taxon>Methanobacteriati</taxon>
        <taxon>Methanobacteriota</taxon>
        <taxon>Stenosarchaea group</taxon>
        <taxon>Methanomicrobia</taxon>
        <taxon>Methanosarcinales</taxon>
        <taxon>Methanosarcinaceae</taxon>
        <taxon>Methanosarcina</taxon>
    </lineage>
</organism>
<keyword id="KW-0479">Metal-binding</keyword>
<keyword id="KW-0687">Ribonucleoprotein</keyword>
<keyword id="KW-0689">Ribosomal protein</keyword>
<keyword id="KW-0694">RNA-binding</keyword>
<keyword id="KW-0699">rRNA-binding</keyword>
<keyword id="KW-0862">Zinc</keyword>
<comment type="function">
    <text evidence="1">Binds 16S rRNA, required for the assembly of 30S particles.</text>
</comment>
<comment type="cofactor">
    <cofactor evidence="1">
        <name>Zn(2+)</name>
        <dbReference type="ChEBI" id="CHEBI:29105"/>
    </cofactor>
    <text evidence="1">Binds 1 zinc ion per subunit.</text>
</comment>
<comment type="subunit">
    <text evidence="1">Part of the 30S ribosomal subunit.</text>
</comment>
<comment type="similarity">
    <text evidence="1">Belongs to the universal ribosomal protein uS14 family. Zinc-binding uS14 subfamily.</text>
</comment>
<accession>Q8PV36</accession>
<feature type="chain" id="PRO_0000269164" description="Small ribosomal subunit protein uS14">
    <location>
        <begin position="1"/>
        <end position="50"/>
    </location>
</feature>
<feature type="binding site" evidence="1">
    <location>
        <position position="15"/>
    </location>
    <ligand>
        <name>Zn(2+)</name>
        <dbReference type="ChEBI" id="CHEBI:29105"/>
    </ligand>
</feature>
<feature type="binding site" evidence="1">
    <location>
        <position position="18"/>
    </location>
    <ligand>
        <name>Zn(2+)</name>
        <dbReference type="ChEBI" id="CHEBI:29105"/>
    </ligand>
</feature>
<feature type="binding site" evidence="1">
    <location>
        <position position="33"/>
    </location>
    <ligand>
        <name>Zn(2+)</name>
        <dbReference type="ChEBI" id="CHEBI:29105"/>
    </ligand>
</feature>
<feature type="binding site" evidence="1">
    <location>
        <position position="36"/>
    </location>
    <ligand>
        <name>Zn(2+)</name>
        <dbReference type="ChEBI" id="CHEBI:29105"/>
    </ligand>
</feature>
<dbReference type="EMBL" id="AE008384">
    <property type="protein sequence ID" value="AAM31834.1"/>
    <property type="molecule type" value="Genomic_DNA"/>
</dbReference>
<dbReference type="RefSeq" id="WP_011034069.1">
    <property type="nucleotide sequence ID" value="NC_003901.1"/>
</dbReference>
<dbReference type="SMR" id="Q8PV36"/>
<dbReference type="KEGG" id="mma:MM_2138"/>
<dbReference type="PATRIC" id="fig|192952.21.peg.2452"/>
<dbReference type="eggNOG" id="arCOG00782">
    <property type="taxonomic scope" value="Archaea"/>
</dbReference>
<dbReference type="HOGENOM" id="CLU_177289_2_2_2"/>
<dbReference type="Proteomes" id="UP000000595">
    <property type="component" value="Chromosome"/>
</dbReference>
<dbReference type="GO" id="GO:0022627">
    <property type="term" value="C:cytosolic small ribosomal subunit"/>
    <property type="evidence" value="ECO:0007669"/>
    <property type="project" value="TreeGrafter"/>
</dbReference>
<dbReference type="GO" id="GO:0019843">
    <property type="term" value="F:rRNA binding"/>
    <property type="evidence" value="ECO:0007669"/>
    <property type="project" value="UniProtKB-UniRule"/>
</dbReference>
<dbReference type="GO" id="GO:0003735">
    <property type="term" value="F:structural constituent of ribosome"/>
    <property type="evidence" value="ECO:0007669"/>
    <property type="project" value="InterPro"/>
</dbReference>
<dbReference type="GO" id="GO:0008270">
    <property type="term" value="F:zinc ion binding"/>
    <property type="evidence" value="ECO:0007669"/>
    <property type="project" value="UniProtKB-UniRule"/>
</dbReference>
<dbReference type="GO" id="GO:0002181">
    <property type="term" value="P:cytoplasmic translation"/>
    <property type="evidence" value="ECO:0007669"/>
    <property type="project" value="TreeGrafter"/>
</dbReference>
<dbReference type="FunFam" id="4.10.830.10:FF:000002">
    <property type="entry name" value="40S ribosomal protein S29"/>
    <property type="match status" value="1"/>
</dbReference>
<dbReference type="Gene3D" id="4.10.830.10">
    <property type="entry name" value="30s Ribosomal Protein S14, Chain N"/>
    <property type="match status" value="1"/>
</dbReference>
<dbReference type="HAMAP" id="MF_01364_A">
    <property type="entry name" value="Ribosomal_uS14_2_A"/>
    <property type="match status" value="1"/>
</dbReference>
<dbReference type="InterPro" id="IPR001209">
    <property type="entry name" value="Ribosomal_uS14"/>
</dbReference>
<dbReference type="InterPro" id="IPR023676">
    <property type="entry name" value="Ribosomal_uS14_arc"/>
</dbReference>
<dbReference type="InterPro" id="IPR018271">
    <property type="entry name" value="Ribosomal_uS14_CS"/>
</dbReference>
<dbReference type="InterPro" id="IPR039744">
    <property type="entry name" value="RIbosomal_uS14_euk_arc"/>
</dbReference>
<dbReference type="InterPro" id="IPR043140">
    <property type="entry name" value="Ribosomal_uS14_sf"/>
</dbReference>
<dbReference type="NCBIfam" id="NF004424">
    <property type="entry name" value="PRK05766.1"/>
    <property type="match status" value="1"/>
</dbReference>
<dbReference type="PANTHER" id="PTHR12010">
    <property type="entry name" value="40S RIBOSOMAL PROTEIN S29"/>
    <property type="match status" value="1"/>
</dbReference>
<dbReference type="PANTHER" id="PTHR12010:SF2">
    <property type="entry name" value="40S RIBOSOMAL PROTEIN S29"/>
    <property type="match status" value="1"/>
</dbReference>
<dbReference type="Pfam" id="PF00253">
    <property type="entry name" value="Ribosomal_S14"/>
    <property type="match status" value="1"/>
</dbReference>
<dbReference type="SUPFAM" id="SSF57716">
    <property type="entry name" value="Glucocorticoid receptor-like (DNA-binding domain)"/>
    <property type="match status" value="1"/>
</dbReference>
<dbReference type="PROSITE" id="PS00527">
    <property type="entry name" value="RIBOSOMAL_S14"/>
    <property type="match status" value="1"/>
</dbReference>
<sequence>MTDSIDKSGRGVNECKRCGRKQGLVRKYDIYLCRHCFREIAHEMGFEKYS</sequence>
<name>RS14Z_METMA</name>
<reference key="1">
    <citation type="journal article" date="2002" name="J. Mol. Microbiol. Biotechnol.">
        <title>The genome of Methanosarcina mazei: evidence for lateral gene transfer between Bacteria and Archaea.</title>
        <authorList>
            <person name="Deppenmeier U."/>
            <person name="Johann A."/>
            <person name="Hartsch T."/>
            <person name="Merkl R."/>
            <person name="Schmitz R.A."/>
            <person name="Martinez-Arias R."/>
            <person name="Henne A."/>
            <person name="Wiezer A."/>
            <person name="Baeumer S."/>
            <person name="Jacobi C."/>
            <person name="Brueggemann H."/>
            <person name="Lienard T."/>
            <person name="Christmann A."/>
            <person name="Boemecke M."/>
            <person name="Steckel S."/>
            <person name="Bhattacharyya A."/>
            <person name="Lykidis A."/>
            <person name="Overbeek R."/>
            <person name="Klenk H.-P."/>
            <person name="Gunsalus R.P."/>
            <person name="Fritz H.-J."/>
            <person name="Gottschalk G."/>
        </authorList>
    </citation>
    <scope>NUCLEOTIDE SEQUENCE [LARGE SCALE GENOMIC DNA]</scope>
    <source>
        <strain>ATCC BAA-159 / DSM 3647 / Goe1 / Go1 / JCM 11833 / OCM 88</strain>
    </source>
</reference>
<proteinExistence type="inferred from homology"/>
<evidence type="ECO:0000255" key="1">
    <source>
        <dbReference type="HAMAP-Rule" id="MF_01364"/>
    </source>
</evidence>
<evidence type="ECO:0000305" key="2"/>
<protein>
    <recommendedName>
        <fullName evidence="1">Small ribosomal subunit protein uS14</fullName>
    </recommendedName>
    <alternativeName>
        <fullName evidence="2">30S ribosomal protein S14 type Z</fullName>
    </alternativeName>
</protein>